<comment type="function">
    <text evidence="1 4">Component of the velvet transcription factor complex that controls sexual/asexual developmental ratio in response to light, promoting sexual development in the darkness while stimulating asexual sporulation under illumination (By similarity). The velvet complex acts as a global regulator for secondary metabolite gene expression (By similarity). Component of the velB-VosA heterodimeric complex that plays a dual role in activating genes associated with spore maturation and repressing certain development-associated genes (By similarity). The velB-VosA complex binds DNA through the DNA-binding domain of vosA that recognizes an 11-nucleotide consensus sequence 5'-CTGGCCGCGGC-3' consisting of two motifs in the promoters of key developmental regulatory genes (By similarity). Required for full virulence on seedlings (PubMed:24064149).</text>
</comment>
<comment type="subunit">
    <text evidence="1">Component of the heterotrimeric velvet complex composed of laeA, veA and velB; VeA acting as a bridging protein between laeA and velB (By similarity). Forms a heterodimeric complex with vosA; the formation of the velB-vosA complex is light-dependent (By similarity).</text>
</comment>
<comment type="subcellular location">
    <subcellularLocation>
        <location evidence="1">Nucleus</location>
    </subcellularLocation>
    <subcellularLocation>
        <location evidence="1">Cytoplasm</location>
    </subcellularLocation>
    <text evidence="1">Nuclear localization is mediated by veA (By similarity).</text>
</comment>
<comment type="disruption phenotype">
    <text evidence="4">Leads to reduced virulence (PubMed:24064149).</text>
</comment>
<comment type="similarity">
    <text evidence="6">Belongs to the velvet family. VelB subfamily.</text>
</comment>
<accession>A0A0D1CY03</accession>
<feature type="chain" id="PRO_0000435909" description="Velvet complex subunit umv2">
    <location>
        <begin position="1"/>
        <end position="472"/>
    </location>
</feature>
<feature type="domain" description="Velvet" evidence="2">
    <location>
        <begin position="158"/>
        <end position="441"/>
    </location>
</feature>
<feature type="region of interest" description="Disordered" evidence="3">
    <location>
        <begin position="1"/>
        <end position="121"/>
    </location>
</feature>
<feature type="region of interest" description="Disordered" evidence="3">
    <location>
        <begin position="281"/>
        <end position="327"/>
    </location>
</feature>
<feature type="region of interest" description="Disordered" evidence="3">
    <location>
        <begin position="433"/>
        <end position="472"/>
    </location>
</feature>
<feature type="compositionally biased region" description="Basic and acidic residues" evidence="3">
    <location>
        <begin position="1"/>
        <end position="10"/>
    </location>
</feature>
<feature type="compositionally biased region" description="Basic and acidic residues" evidence="3">
    <location>
        <begin position="29"/>
        <end position="59"/>
    </location>
</feature>
<feature type="compositionally biased region" description="Basic and acidic residues" evidence="3">
    <location>
        <begin position="67"/>
        <end position="80"/>
    </location>
</feature>
<feature type="compositionally biased region" description="Basic and acidic residues" evidence="3">
    <location>
        <begin position="89"/>
        <end position="105"/>
    </location>
</feature>
<feature type="compositionally biased region" description="Low complexity" evidence="3">
    <location>
        <begin position="106"/>
        <end position="116"/>
    </location>
</feature>
<feature type="compositionally biased region" description="Polar residues" evidence="3">
    <location>
        <begin position="286"/>
        <end position="298"/>
    </location>
</feature>
<feature type="compositionally biased region" description="Gly residues" evidence="3">
    <location>
        <begin position="456"/>
        <end position="466"/>
    </location>
</feature>
<name>VELB_MYCMD</name>
<reference key="1">
    <citation type="journal article" date="2006" name="Nature">
        <title>Insights from the genome of the biotrophic fungal plant pathogen Ustilago maydis.</title>
        <authorList>
            <person name="Kaemper J."/>
            <person name="Kahmann R."/>
            <person name="Boelker M."/>
            <person name="Ma L.-J."/>
            <person name="Brefort T."/>
            <person name="Saville B.J."/>
            <person name="Banuett F."/>
            <person name="Kronstad J.W."/>
            <person name="Gold S.E."/>
            <person name="Mueller O."/>
            <person name="Perlin M.H."/>
            <person name="Woesten H.A.B."/>
            <person name="de Vries R."/>
            <person name="Ruiz-Herrera J."/>
            <person name="Reynaga-Pena C.G."/>
            <person name="Snetselaar K."/>
            <person name="McCann M."/>
            <person name="Perez-Martin J."/>
            <person name="Feldbruegge M."/>
            <person name="Basse C.W."/>
            <person name="Steinberg G."/>
            <person name="Ibeas J.I."/>
            <person name="Holloman W."/>
            <person name="Guzman P."/>
            <person name="Farman M.L."/>
            <person name="Stajich J.E."/>
            <person name="Sentandreu R."/>
            <person name="Gonzalez-Prieto J.M."/>
            <person name="Kennell J.C."/>
            <person name="Molina L."/>
            <person name="Schirawski J."/>
            <person name="Mendoza-Mendoza A."/>
            <person name="Greilinger D."/>
            <person name="Muench K."/>
            <person name="Roessel N."/>
            <person name="Scherer M."/>
            <person name="Vranes M."/>
            <person name="Ladendorf O."/>
            <person name="Vincon V."/>
            <person name="Fuchs U."/>
            <person name="Sandrock B."/>
            <person name="Meng S."/>
            <person name="Ho E.C.H."/>
            <person name="Cahill M.J."/>
            <person name="Boyce K.J."/>
            <person name="Klose J."/>
            <person name="Klosterman S.J."/>
            <person name="Deelstra H.J."/>
            <person name="Ortiz-Castellanos L."/>
            <person name="Li W."/>
            <person name="Sanchez-Alonso P."/>
            <person name="Schreier P.H."/>
            <person name="Haeuser-Hahn I."/>
            <person name="Vaupel M."/>
            <person name="Koopmann E."/>
            <person name="Friedrich G."/>
            <person name="Voss H."/>
            <person name="Schlueter T."/>
            <person name="Margolis J."/>
            <person name="Platt D."/>
            <person name="Swimmer C."/>
            <person name="Gnirke A."/>
            <person name="Chen F."/>
            <person name="Vysotskaia V."/>
            <person name="Mannhaupt G."/>
            <person name="Gueldener U."/>
            <person name="Muensterkoetter M."/>
            <person name="Haase D."/>
            <person name="Oesterheld M."/>
            <person name="Mewes H.-W."/>
            <person name="Mauceli E.W."/>
            <person name="DeCaprio D."/>
            <person name="Wade C.M."/>
            <person name="Butler J."/>
            <person name="Young S.K."/>
            <person name="Jaffe D.B."/>
            <person name="Calvo S.E."/>
            <person name="Nusbaum C."/>
            <person name="Galagan J.E."/>
            <person name="Birren B.W."/>
        </authorList>
    </citation>
    <scope>NUCLEOTIDE SEQUENCE [LARGE SCALE GENOMIC DNA]</scope>
    <source>
        <strain>DSM 14603 / FGSC 9021 / UM521</strain>
    </source>
</reference>
<reference key="2">
    <citation type="submission" date="2014-09" db="EMBL/GenBank/DDBJ databases">
        <authorList>
            <person name="Gueldener U."/>
            <person name="Muensterkoetter M."/>
            <person name="Walter M.C."/>
            <person name="Mannhaupt G."/>
            <person name="Kahmann R."/>
        </authorList>
    </citation>
    <scope>GENOME REANNOTATION</scope>
    <source>
        <strain>DSM 14603 / FGSC 9021 / UM521</strain>
    </source>
</reference>
<reference key="3">
    <citation type="journal article" date="2013" name="Fungal Genet. Biol.">
        <title>Two members of the Ustilago maydis velvet family influence teliospore development and virulence on maize seedlings.</title>
        <authorList>
            <person name="Karakkat B.B."/>
            <person name="Gold S.E."/>
            <person name="Covert S.F."/>
        </authorList>
    </citation>
    <scope>FUNCTION</scope>
    <scope>DISRUPTION PHENOTYPE</scope>
</reference>
<organism>
    <name type="scientific">Mycosarcoma maydis</name>
    <name type="common">Corn smut fungus</name>
    <name type="synonym">Ustilago maydis</name>
    <dbReference type="NCBI Taxonomy" id="5270"/>
    <lineage>
        <taxon>Eukaryota</taxon>
        <taxon>Fungi</taxon>
        <taxon>Dikarya</taxon>
        <taxon>Basidiomycota</taxon>
        <taxon>Ustilaginomycotina</taxon>
        <taxon>Ustilaginomycetes</taxon>
        <taxon>Ustilaginales</taxon>
        <taxon>Ustilaginaceae</taxon>
        <taxon>Mycosarcoma</taxon>
    </lineage>
</organism>
<sequence length="472" mass="51458">MSRSDTDGRDTSFASRNGVGGSQLSEPPSQRRERPDYGYAVEETHRPHTAQERFPDSHGQRSAPDLYSRDSDRFSYHRGDTLTPAQERSYQRELELMKARGEQERSYGGASASRSSRPLEADHHYGGMPLTRGLVDDFAPEPMASSGRPNLEGFSRVENGRRYRLVVVQHPSRARMCGFGDKDRRPLSPTLIVKLIITEEATGEEISPCEVNTSLFLLATDLCHPDDLMLAPRNILVHHHASSLSSNPIQHGGAGGYATDEFGHRSGSSLGNFAADGGGPCDDGYRSSTHPQHASESTGAAALPLSSSSMNPYDRSPHASSSIQFGGGGNFAQQSQAESYTRNLVGAAVASASVLKDEQDKWCTFFVFQDISVRTEGVYRIKLMFVNLEVSGRVGTGVADALAETYTDAFTVYSPRRFPGMLDPTPLSRKLASQGIKIPVRNDKKKQRRRNDEGGDGMGDYDGASGGDEDDE</sequence>
<keyword id="KW-0963">Cytoplasm</keyword>
<keyword id="KW-0539">Nucleus</keyword>
<keyword id="KW-1185">Reference proteome</keyword>
<keyword id="KW-0749">Sporulation</keyword>
<keyword id="KW-0804">Transcription</keyword>
<keyword id="KW-0805">Transcription regulation</keyword>
<keyword id="KW-0843">Virulence</keyword>
<proteinExistence type="inferred from homology"/>
<gene>
    <name evidence="5" type="primary">umv2</name>
    <name type="ORF">UMAG_01146</name>
</gene>
<protein>
    <recommendedName>
        <fullName evidence="6">Velvet complex subunit umv2</fullName>
    </recommendedName>
</protein>
<evidence type="ECO:0000250" key="1">
    <source>
        <dbReference type="UniProtKB" id="C8VTS4"/>
    </source>
</evidence>
<evidence type="ECO:0000255" key="2">
    <source>
        <dbReference type="PROSITE-ProRule" id="PRU01165"/>
    </source>
</evidence>
<evidence type="ECO:0000256" key="3">
    <source>
        <dbReference type="SAM" id="MobiDB-lite"/>
    </source>
</evidence>
<evidence type="ECO:0000269" key="4">
    <source>
    </source>
</evidence>
<evidence type="ECO:0000303" key="5">
    <source>
    </source>
</evidence>
<evidence type="ECO:0000305" key="6"/>
<dbReference type="EMBL" id="CM003141">
    <property type="protein sequence ID" value="KIS71243.1"/>
    <property type="molecule type" value="Genomic_DNA"/>
</dbReference>
<dbReference type="RefSeq" id="XP_011387094.1">
    <property type="nucleotide sequence ID" value="XM_011388792.1"/>
</dbReference>
<dbReference type="SMR" id="A0A0D1CY03"/>
<dbReference type="STRING" id="237631.A0A0D1CY03"/>
<dbReference type="EnsemblFungi" id="KIS71243">
    <property type="protein sequence ID" value="KIS71243"/>
    <property type="gene ID" value="UMAG_01146"/>
</dbReference>
<dbReference type="GeneID" id="23562250"/>
<dbReference type="KEGG" id="uma:UMAG_01146"/>
<dbReference type="VEuPathDB" id="FungiDB:UMAG_01146"/>
<dbReference type="eggNOG" id="ENOG502S1B4">
    <property type="taxonomic scope" value="Eukaryota"/>
</dbReference>
<dbReference type="InParanoid" id="A0A0D1CY03"/>
<dbReference type="OMA" id="LATDLCH"/>
<dbReference type="OrthoDB" id="1746739at2759"/>
<dbReference type="Proteomes" id="UP000000561">
    <property type="component" value="Chromosome 2"/>
</dbReference>
<dbReference type="GO" id="GO:0005737">
    <property type="term" value="C:cytoplasm"/>
    <property type="evidence" value="ECO:0007669"/>
    <property type="project" value="UniProtKB-SubCell"/>
</dbReference>
<dbReference type="GO" id="GO:0005634">
    <property type="term" value="C:nucleus"/>
    <property type="evidence" value="ECO:0000318"/>
    <property type="project" value="GO_Central"/>
</dbReference>
<dbReference type="GO" id="GO:0030435">
    <property type="term" value="P:sporulation resulting in formation of a cellular spore"/>
    <property type="evidence" value="ECO:0000318"/>
    <property type="project" value="GO_Central"/>
</dbReference>
<dbReference type="GO" id="GO:0005992">
    <property type="term" value="P:trehalose biosynthetic process"/>
    <property type="evidence" value="ECO:0000318"/>
    <property type="project" value="GO_Central"/>
</dbReference>
<dbReference type="Gene3D" id="2.60.40.3960">
    <property type="entry name" value="Velvet domain"/>
    <property type="match status" value="1"/>
</dbReference>
<dbReference type="InterPro" id="IPR021740">
    <property type="entry name" value="Velvet"/>
</dbReference>
<dbReference type="InterPro" id="IPR037525">
    <property type="entry name" value="Velvet_dom"/>
</dbReference>
<dbReference type="InterPro" id="IPR038491">
    <property type="entry name" value="Velvet_dom_sf"/>
</dbReference>
<dbReference type="PANTHER" id="PTHR33572">
    <property type="entry name" value="SPORE DEVELOPMENT REGULATOR VOSA"/>
    <property type="match status" value="1"/>
</dbReference>
<dbReference type="PANTHER" id="PTHR33572:SF3">
    <property type="entry name" value="VELVET COMPLEX SUBUNIT B"/>
    <property type="match status" value="1"/>
</dbReference>
<dbReference type="Pfam" id="PF11754">
    <property type="entry name" value="Velvet"/>
    <property type="match status" value="1"/>
</dbReference>
<dbReference type="PROSITE" id="PS51821">
    <property type="entry name" value="VELVET"/>
    <property type="match status" value="1"/>
</dbReference>